<name>KDPA_ECOL5</name>
<evidence type="ECO:0000255" key="1">
    <source>
        <dbReference type="HAMAP-Rule" id="MF_00275"/>
    </source>
</evidence>
<comment type="function">
    <text evidence="1">Part of the high-affinity ATP-driven potassium transport (or Kdp) system, which catalyzes the hydrolysis of ATP coupled with the electrogenic transport of potassium into the cytoplasm. This subunit binds the periplasmic potassium ions and delivers the ions to the membrane domain of KdpB through an intramembrane tunnel.</text>
</comment>
<comment type="subunit">
    <text evidence="1">The system is composed of three essential subunits: KdpA, KdpB and KdpC.</text>
</comment>
<comment type="subcellular location">
    <subcellularLocation>
        <location evidence="1">Cell inner membrane</location>
        <topology evidence="1">Multi-pass membrane protein</topology>
    </subcellularLocation>
</comment>
<comment type="similarity">
    <text evidence="1">Belongs to the KdpA family.</text>
</comment>
<reference key="1">
    <citation type="journal article" date="2006" name="Mol. Microbiol.">
        <title>Role of pathogenicity island-associated integrases in the genome plasticity of uropathogenic Escherichia coli strain 536.</title>
        <authorList>
            <person name="Hochhut B."/>
            <person name="Wilde C."/>
            <person name="Balling G."/>
            <person name="Middendorf B."/>
            <person name="Dobrindt U."/>
            <person name="Brzuszkiewicz E."/>
            <person name="Gottschalk G."/>
            <person name="Carniel E."/>
            <person name="Hacker J."/>
        </authorList>
    </citation>
    <scope>NUCLEOTIDE SEQUENCE [LARGE SCALE GENOMIC DNA]</scope>
    <source>
        <strain>536 / UPEC</strain>
    </source>
</reference>
<gene>
    <name evidence="1" type="primary">kdpA</name>
    <name type="ordered locus">ECP_0717</name>
</gene>
<dbReference type="EMBL" id="CP000247">
    <property type="protein sequence ID" value="ABG68743.1"/>
    <property type="molecule type" value="Genomic_DNA"/>
</dbReference>
<dbReference type="RefSeq" id="WP_000741147.1">
    <property type="nucleotide sequence ID" value="NC_008253.1"/>
</dbReference>
<dbReference type="SMR" id="Q0TJY8"/>
<dbReference type="KEGG" id="ecp:ECP_0717"/>
<dbReference type="HOGENOM" id="CLU_018614_3_0_6"/>
<dbReference type="Proteomes" id="UP000009182">
    <property type="component" value="Chromosome"/>
</dbReference>
<dbReference type="GO" id="GO:0005886">
    <property type="term" value="C:plasma membrane"/>
    <property type="evidence" value="ECO:0007669"/>
    <property type="project" value="UniProtKB-SubCell"/>
</dbReference>
<dbReference type="GO" id="GO:0008556">
    <property type="term" value="F:P-type potassium transmembrane transporter activity"/>
    <property type="evidence" value="ECO:0007669"/>
    <property type="project" value="InterPro"/>
</dbReference>
<dbReference type="GO" id="GO:0030955">
    <property type="term" value="F:potassium ion binding"/>
    <property type="evidence" value="ECO:0007669"/>
    <property type="project" value="UniProtKB-UniRule"/>
</dbReference>
<dbReference type="HAMAP" id="MF_00275">
    <property type="entry name" value="KdpA"/>
    <property type="match status" value="1"/>
</dbReference>
<dbReference type="InterPro" id="IPR004623">
    <property type="entry name" value="KdpA"/>
</dbReference>
<dbReference type="NCBIfam" id="TIGR00680">
    <property type="entry name" value="kdpA"/>
    <property type="match status" value="1"/>
</dbReference>
<dbReference type="PANTHER" id="PTHR30607">
    <property type="entry name" value="POTASSIUM-TRANSPORTING ATPASE A CHAIN"/>
    <property type="match status" value="1"/>
</dbReference>
<dbReference type="PANTHER" id="PTHR30607:SF2">
    <property type="entry name" value="POTASSIUM-TRANSPORTING ATPASE POTASSIUM-BINDING SUBUNIT"/>
    <property type="match status" value="1"/>
</dbReference>
<dbReference type="Pfam" id="PF03814">
    <property type="entry name" value="KdpA"/>
    <property type="match status" value="1"/>
</dbReference>
<dbReference type="PIRSF" id="PIRSF001294">
    <property type="entry name" value="K_ATPaseA"/>
    <property type="match status" value="1"/>
</dbReference>
<feature type="chain" id="PRO_1000022220" description="Potassium-transporting ATPase potassium-binding subunit">
    <location>
        <begin position="1"/>
        <end position="557"/>
    </location>
</feature>
<feature type="transmembrane region" description="Helical" evidence="1">
    <location>
        <begin position="5"/>
        <end position="25"/>
    </location>
</feature>
<feature type="transmembrane region" description="Helical" evidence="1">
    <location>
        <begin position="63"/>
        <end position="83"/>
    </location>
</feature>
<feature type="transmembrane region" description="Helical" evidence="1">
    <location>
        <begin position="132"/>
        <end position="152"/>
    </location>
</feature>
<feature type="transmembrane region" description="Helical" evidence="1">
    <location>
        <begin position="170"/>
        <end position="190"/>
    </location>
</feature>
<feature type="transmembrane region" description="Helical" evidence="1">
    <location>
        <begin position="253"/>
        <end position="273"/>
    </location>
</feature>
<feature type="transmembrane region" description="Helical" evidence="1">
    <location>
        <begin position="283"/>
        <end position="303"/>
    </location>
</feature>
<feature type="transmembrane region" description="Helical" evidence="1">
    <location>
        <begin position="329"/>
        <end position="349"/>
    </location>
</feature>
<feature type="transmembrane region" description="Helical" evidence="1">
    <location>
        <begin position="356"/>
        <end position="376"/>
    </location>
</feature>
<feature type="transmembrane region" description="Helical" evidence="1">
    <location>
        <begin position="379"/>
        <end position="399"/>
    </location>
</feature>
<feature type="transmembrane region" description="Helical" evidence="1">
    <location>
        <begin position="416"/>
        <end position="436"/>
    </location>
</feature>
<feature type="transmembrane region" description="Helical" evidence="1">
    <location>
        <begin position="484"/>
        <end position="504"/>
    </location>
</feature>
<feature type="transmembrane region" description="Helical" evidence="1">
    <location>
        <begin position="526"/>
        <end position="546"/>
    </location>
</feature>
<sequence>MAAQGFLLIATFLLVLMVLARPLGSGLARLINDIPLPGTTGVERVLFSALGVSDREMNWKQYLSAILGLNILGLAVLFFMLLGQHYLPLNPQQLPGLSWDLALNTAVSFVTNTNWQSYSGETTLSYFSQMAGLTVQNFLSAASGIAVIFALIRAFTRQSMNTLGNAWVDLLRITLWVLTPVALLIALFFIQQGALQNFLPYQAVTTIEGAQQLLPMGPVASQEAIKMLGTNGGGFFNANSSHPFENPTVLTNFVQMLAIFLIPTALCFAFGEVAGDRRQGRMLLWAMSVIFVICVGVVMWAEVQGNPHLLALGADSSINMEGKESRFGVLVSSLFAVVTTAASCGAVIAMHDSFTALGGMVPMWLMQIGEVVFGGVGSGLYGMMLFVLLAVFIAGLMIGRTPEYLGKKIDVREMKLTALAILVTPTLVLMGAALAMMTDAGRSAMLNPGPHGFSEVLYAVSSAANNNGSAFAGLSANSPFWNCLLALCMFVGRFGVIIPVMAIAGSLVSKKSQPASSGTLPTHGPLFVGLLIGTVLLVGALTFIPALALGPVAEYLS</sequence>
<protein>
    <recommendedName>
        <fullName evidence="1">Potassium-transporting ATPase potassium-binding subunit</fullName>
    </recommendedName>
    <alternativeName>
        <fullName evidence="1">ATP phosphohydrolase [potassium-transporting] A chain</fullName>
    </alternativeName>
    <alternativeName>
        <fullName evidence="1">Potassium-binding and translocating subunit A</fullName>
    </alternativeName>
    <alternativeName>
        <fullName evidence="1">Potassium-translocating ATPase A chain</fullName>
    </alternativeName>
</protein>
<keyword id="KW-0997">Cell inner membrane</keyword>
<keyword id="KW-1003">Cell membrane</keyword>
<keyword id="KW-0406">Ion transport</keyword>
<keyword id="KW-0472">Membrane</keyword>
<keyword id="KW-0630">Potassium</keyword>
<keyword id="KW-0633">Potassium transport</keyword>
<keyword id="KW-0812">Transmembrane</keyword>
<keyword id="KW-1133">Transmembrane helix</keyword>
<keyword id="KW-0813">Transport</keyword>
<accession>Q0TJY8</accession>
<proteinExistence type="inferred from homology"/>
<organism>
    <name type="scientific">Escherichia coli O6:K15:H31 (strain 536 / UPEC)</name>
    <dbReference type="NCBI Taxonomy" id="362663"/>
    <lineage>
        <taxon>Bacteria</taxon>
        <taxon>Pseudomonadati</taxon>
        <taxon>Pseudomonadota</taxon>
        <taxon>Gammaproteobacteria</taxon>
        <taxon>Enterobacterales</taxon>
        <taxon>Enterobacteriaceae</taxon>
        <taxon>Escherichia</taxon>
    </lineage>
</organism>